<keyword id="KW-1185">Reference proteome</keyword>
<keyword id="KW-0687">Ribonucleoprotein</keyword>
<keyword id="KW-0689">Ribosomal protein</keyword>
<gene>
    <name evidence="1" type="primary">rpmD</name>
    <name type="ordered locus">Lxx20160</name>
</gene>
<name>RL30_LEIXX</name>
<evidence type="ECO:0000255" key="1">
    <source>
        <dbReference type="HAMAP-Rule" id="MF_01371"/>
    </source>
</evidence>
<evidence type="ECO:0000305" key="2"/>
<protein>
    <recommendedName>
        <fullName evidence="1">Large ribosomal subunit protein uL30</fullName>
    </recommendedName>
    <alternativeName>
        <fullName evidence="2">50S ribosomal protein L30</fullName>
    </alternativeName>
</protein>
<comment type="subunit">
    <text evidence="1">Part of the 50S ribosomal subunit.</text>
</comment>
<comment type="similarity">
    <text evidence="1">Belongs to the universal ribosomal protein uL30 family.</text>
</comment>
<dbReference type="EMBL" id="AE016822">
    <property type="protein sequence ID" value="AAT89732.1"/>
    <property type="molecule type" value="Genomic_DNA"/>
</dbReference>
<dbReference type="RefSeq" id="WP_011186718.1">
    <property type="nucleotide sequence ID" value="NC_006087.1"/>
</dbReference>
<dbReference type="SMR" id="Q6AD12"/>
<dbReference type="STRING" id="281090.Lxx20160"/>
<dbReference type="KEGG" id="lxx:Lxx20160"/>
<dbReference type="eggNOG" id="COG1841">
    <property type="taxonomic scope" value="Bacteria"/>
</dbReference>
<dbReference type="HOGENOM" id="CLU_131047_2_0_11"/>
<dbReference type="Proteomes" id="UP000001306">
    <property type="component" value="Chromosome"/>
</dbReference>
<dbReference type="GO" id="GO:0015934">
    <property type="term" value="C:large ribosomal subunit"/>
    <property type="evidence" value="ECO:0007669"/>
    <property type="project" value="InterPro"/>
</dbReference>
<dbReference type="GO" id="GO:0003735">
    <property type="term" value="F:structural constituent of ribosome"/>
    <property type="evidence" value="ECO:0007669"/>
    <property type="project" value="InterPro"/>
</dbReference>
<dbReference type="GO" id="GO:0006412">
    <property type="term" value="P:translation"/>
    <property type="evidence" value="ECO:0007669"/>
    <property type="project" value="UniProtKB-UniRule"/>
</dbReference>
<dbReference type="CDD" id="cd01658">
    <property type="entry name" value="Ribosomal_L30"/>
    <property type="match status" value="1"/>
</dbReference>
<dbReference type="Gene3D" id="3.30.1390.20">
    <property type="entry name" value="Ribosomal protein L30, ferredoxin-like fold domain"/>
    <property type="match status" value="1"/>
</dbReference>
<dbReference type="HAMAP" id="MF_01371_B">
    <property type="entry name" value="Ribosomal_uL30_B"/>
    <property type="match status" value="1"/>
</dbReference>
<dbReference type="InterPro" id="IPR036919">
    <property type="entry name" value="Ribo_uL30_ferredoxin-like_sf"/>
</dbReference>
<dbReference type="InterPro" id="IPR005996">
    <property type="entry name" value="Ribosomal_uL30_bac-type"/>
</dbReference>
<dbReference type="InterPro" id="IPR016082">
    <property type="entry name" value="Ribosomal_uL30_ferredoxin-like"/>
</dbReference>
<dbReference type="NCBIfam" id="TIGR01308">
    <property type="entry name" value="rpmD_bact"/>
    <property type="match status" value="1"/>
</dbReference>
<dbReference type="Pfam" id="PF00327">
    <property type="entry name" value="Ribosomal_L30"/>
    <property type="match status" value="1"/>
</dbReference>
<dbReference type="PIRSF" id="PIRSF002211">
    <property type="entry name" value="Ribosomal_L30_bac-type"/>
    <property type="match status" value="1"/>
</dbReference>
<dbReference type="SUPFAM" id="SSF55129">
    <property type="entry name" value="Ribosomal protein L30p/L7e"/>
    <property type="match status" value="1"/>
</dbReference>
<feature type="chain" id="PRO_1000056060" description="Large ribosomal subunit protein uL30">
    <location>
        <begin position="1"/>
        <end position="60"/>
    </location>
</feature>
<organism>
    <name type="scientific">Leifsonia xyli subsp. xyli (strain CTCB07)</name>
    <dbReference type="NCBI Taxonomy" id="281090"/>
    <lineage>
        <taxon>Bacteria</taxon>
        <taxon>Bacillati</taxon>
        <taxon>Actinomycetota</taxon>
        <taxon>Actinomycetes</taxon>
        <taxon>Micrococcales</taxon>
        <taxon>Microbacteriaceae</taxon>
        <taxon>Leifsonia</taxon>
    </lineage>
</organism>
<proteinExistence type="inferred from homology"/>
<accession>Q6AD12</accession>
<sequence length="60" mass="6942">MARLKITQIKSKVSEKQYQRDTLRSLGLKRIGDVTVREDTAQNRGYVRTVAHLVKVEEID</sequence>
<reference key="1">
    <citation type="journal article" date="2004" name="Mol. Plant Microbe Interact.">
        <title>The genome sequence of the Gram-positive sugarcane pathogen Leifsonia xyli subsp. xyli.</title>
        <authorList>
            <person name="Monteiro-Vitorello C.B."/>
            <person name="Camargo L.E.A."/>
            <person name="Van Sluys M.A."/>
            <person name="Kitajima J.P."/>
            <person name="Truffi D."/>
            <person name="do Amaral A.M."/>
            <person name="Harakava R."/>
            <person name="de Oliveira J.C.F."/>
            <person name="Wood D."/>
            <person name="de Oliveira M.C."/>
            <person name="Miyaki C.Y."/>
            <person name="Takita M.A."/>
            <person name="da Silva A.C.R."/>
            <person name="Furlan L.R."/>
            <person name="Carraro D.M."/>
            <person name="Camarotte G."/>
            <person name="Almeida N.F. Jr."/>
            <person name="Carrer H."/>
            <person name="Coutinho L.L."/>
            <person name="El-Dorry H.A."/>
            <person name="Ferro M.I.T."/>
            <person name="Gagliardi P.R."/>
            <person name="Giglioti E."/>
            <person name="Goldman M.H.S."/>
            <person name="Goldman G.H."/>
            <person name="Kimura E.T."/>
            <person name="Ferro E.S."/>
            <person name="Kuramae E.E."/>
            <person name="Lemos E.G.M."/>
            <person name="Lemos M.V.F."/>
            <person name="Mauro S.M.Z."/>
            <person name="Machado M.A."/>
            <person name="Marino C.L."/>
            <person name="Menck C.F."/>
            <person name="Nunes L.R."/>
            <person name="Oliveira R.C."/>
            <person name="Pereira G.G."/>
            <person name="Siqueira W."/>
            <person name="de Souza A.A."/>
            <person name="Tsai S.M."/>
            <person name="Zanca A.S."/>
            <person name="Simpson A.J.G."/>
            <person name="Brumbley S.M."/>
            <person name="Setubal J.C."/>
        </authorList>
    </citation>
    <scope>NUCLEOTIDE SEQUENCE [LARGE SCALE GENOMIC DNA]</scope>
    <source>
        <strain>CTCB07</strain>
    </source>
</reference>